<feature type="chain" id="PRO_1000057337" description="UPF0102 protein PSPA7_4996">
    <location>
        <begin position="1"/>
        <end position="125"/>
    </location>
</feature>
<proteinExistence type="inferred from homology"/>
<sequence>MTDRANSRDKGRQAEEMACAHLLRQGLATLGKNWTCRRGELDLVMLDGDTVVFVEVRSRRHRAWGGALESIDARKRQRLILSAELFLQQEARWAKRPCRFDVVTVDTSDGQSPPRLDWIQNAFDA</sequence>
<protein>
    <recommendedName>
        <fullName evidence="1">UPF0102 protein PSPA7_4996</fullName>
    </recommendedName>
</protein>
<evidence type="ECO:0000255" key="1">
    <source>
        <dbReference type="HAMAP-Rule" id="MF_00048"/>
    </source>
</evidence>
<accession>A6VB97</accession>
<dbReference type="EMBL" id="CP000744">
    <property type="protein sequence ID" value="ABR83921.1"/>
    <property type="molecule type" value="Genomic_DNA"/>
</dbReference>
<dbReference type="RefSeq" id="WP_003150412.1">
    <property type="nucleotide sequence ID" value="NC_009656.1"/>
</dbReference>
<dbReference type="SMR" id="A6VB97"/>
<dbReference type="GeneID" id="77222925"/>
<dbReference type="KEGG" id="pap:PSPA7_4996"/>
<dbReference type="HOGENOM" id="CLU_115353_1_0_6"/>
<dbReference type="Proteomes" id="UP000001582">
    <property type="component" value="Chromosome"/>
</dbReference>
<dbReference type="GO" id="GO:0003676">
    <property type="term" value="F:nucleic acid binding"/>
    <property type="evidence" value="ECO:0007669"/>
    <property type="project" value="InterPro"/>
</dbReference>
<dbReference type="Gene3D" id="3.40.1350.10">
    <property type="match status" value="1"/>
</dbReference>
<dbReference type="HAMAP" id="MF_00048">
    <property type="entry name" value="UPF0102"/>
    <property type="match status" value="1"/>
</dbReference>
<dbReference type="InterPro" id="IPR011335">
    <property type="entry name" value="Restrct_endonuc-II-like"/>
</dbReference>
<dbReference type="InterPro" id="IPR011856">
    <property type="entry name" value="tRNA_endonuc-like_dom_sf"/>
</dbReference>
<dbReference type="InterPro" id="IPR003509">
    <property type="entry name" value="UPF0102_YraN-like"/>
</dbReference>
<dbReference type="NCBIfam" id="NF009150">
    <property type="entry name" value="PRK12497.1-3"/>
    <property type="match status" value="1"/>
</dbReference>
<dbReference type="NCBIfam" id="TIGR00252">
    <property type="entry name" value="YraN family protein"/>
    <property type="match status" value="1"/>
</dbReference>
<dbReference type="PANTHER" id="PTHR34039">
    <property type="entry name" value="UPF0102 PROTEIN YRAN"/>
    <property type="match status" value="1"/>
</dbReference>
<dbReference type="PANTHER" id="PTHR34039:SF1">
    <property type="entry name" value="UPF0102 PROTEIN YRAN"/>
    <property type="match status" value="1"/>
</dbReference>
<dbReference type="Pfam" id="PF02021">
    <property type="entry name" value="UPF0102"/>
    <property type="match status" value="1"/>
</dbReference>
<dbReference type="SUPFAM" id="SSF52980">
    <property type="entry name" value="Restriction endonuclease-like"/>
    <property type="match status" value="1"/>
</dbReference>
<name>Y4996_PSEP7</name>
<comment type="similarity">
    <text evidence="1">Belongs to the UPF0102 family.</text>
</comment>
<reference key="1">
    <citation type="submission" date="2007-06" db="EMBL/GenBank/DDBJ databases">
        <authorList>
            <person name="Dodson R.J."/>
            <person name="Harkins D."/>
            <person name="Paulsen I.T."/>
        </authorList>
    </citation>
    <scope>NUCLEOTIDE SEQUENCE [LARGE SCALE GENOMIC DNA]</scope>
    <source>
        <strain>DSM 24068 / PA7</strain>
    </source>
</reference>
<organism>
    <name type="scientific">Pseudomonas paraeruginosa (strain DSM 24068 / PA7)</name>
    <name type="common">Pseudomonas aeruginosa (strain PA7)</name>
    <dbReference type="NCBI Taxonomy" id="381754"/>
    <lineage>
        <taxon>Bacteria</taxon>
        <taxon>Pseudomonadati</taxon>
        <taxon>Pseudomonadota</taxon>
        <taxon>Gammaproteobacteria</taxon>
        <taxon>Pseudomonadales</taxon>
        <taxon>Pseudomonadaceae</taxon>
        <taxon>Pseudomonas</taxon>
        <taxon>Pseudomonas paraeruginosa</taxon>
    </lineage>
</organism>
<gene>
    <name type="ordered locus">PSPA7_4996</name>
</gene>